<accession>Q9WZV5</accession>
<organism>
    <name type="scientific">Thermotoga maritima (strain ATCC 43589 / DSM 3109 / JCM 10099 / NBRC 100826 / MSB8)</name>
    <dbReference type="NCBI Taxonomy" id="243274"/>
    <lineage>
        <taxon>Bacteria</taxon>
        <taxon>Thermotogati</taxon>
        <taxon>Thermotogota</taxon>
        <taxon>Thermotogae</taxon>
        <taxon>Thermotogales</taxon>
        <taxon>Thermotogaceae</taxon>
        <taxon>Thermotoga</taxon>
    </lineage>
</organism>
<evidence type="ECO:0000255" key="1">
    <source>
        <dbReference type="HAMAP-Rule" id="MF_00081"/>
    </source>
</evidence>
<evidence type="ECO:0007829" key="2">
    <source>
        <dbReference type="PDB" id="1STZ"/>
    </source>
</evidence>
<gene>
    <name evidence="1" type="primary">hrcA</name>
    <name type="ordered locus">TM_0851</name>
</gene>
<protein>
    <recommendedName>
        <fullName evidence="1">Heat-inducible transcription repressor HrcA</fullName>
    </recommendedName>
</protein>
<comment type="function">
    <text evidence="1">Negative regulator of class I heat shock genes (grpE-dnaK-dnaJ and groELS operons). Prevents heat-shock induction of these operons.</text>
</comment>
<comment type="similarity">
    <text evidence="1">Belongs to the HrcA family.</text>
</comment>
<feature type="chain" id="PRO_0000182552" description="Heat-inducible transcription repressor HrcA">
    <location>
        <begin position="1"/>
        <end position="338"/>
    </location>
</feature>
<feature type="helix" evidence="2">
    <location>
        <begin position="17"/>
        <end position="33"/>
    </location>
</feature>
<feature type="helix" evidence="2">
    <location>
        <begin position="39"/>
        <end position="45"/>
    </location>
</feature>
<feature type="helix" evidence="2">
    <location>
        <begin position="52"/>
        <end position="64"/>
    </location>
</feature>
<feature type="strand" evidence="2">
    <location>
        <begin position="67"/>
        <end position="69"/>
    </location>
</feature>
<feature type="strand" evidence="2">
    <location>
        <begin position="77"/>
        <end position="79"/>
    </location>
</feature>
<feature type="helix" evidence="2">
    <location>
        <begin position="81"/>
        <end position="94"/>
    </location>
</feature>
<feature type="turn" evidence="2">
    <location>
        <begin position="95"/>
        <end position="97"/>
    </location>
</feature>
<feature type="helix" evidence="2">
    <location>
        <begin position="103"/>
        <end position="106"/>
    </location>
</feature>
<feature type="helix" evidence="2">
    <location>
        <begin position="116"/>
        <end position="131"/>
    </location>
</feature>
<feature type="strand" evidence="2">
    <location>
        <begin position="134"/>
        <end position="138"/>
    </location>
</feature>
<feature type="helix" evidence="2">
    <location>
        <begin position="142"/>
        <end position="144"/>
    </location>
</feature>
<feature type="strand" evidence="2">
    <location>
        <begin position="149"/>
        <end position="154"/>
    </location>
</feature>
<feature type="strand" evidence="2">
    <location>
        <begin position="156"/>
        <end position="166"/>
    </location>
</feature>
<feature type="strand" evidence="2">
    <location>
        <begin position="169"/>
        <end position="177"/>
    </location>
</feature>
<feature type="helix" evidence="2">
    <location>
        <begin position="184"/>
        <end position="195"/>
    </location>
</feature>
<feature type="helix" evidence="2">
    <location>
        <begin position="200"/>
        <end position="205"/>
    </location>
</feature>
<feature type="helix" evidence="2">
    <location>
        <begin position="209"/>
        <end position="212"/>
    </location>
</feature>
<feature type="helix" evidence="2">
    <location>
        <begin position="215"/>
        <end position="224"/>
    </location>
</feature>
<feature type="strand" evidence="2">
    <location>
        <begin position="230"/>
        <end position="234"/>
    </location>
</feature>
<feature type="helix" evidence="2">
    <location>
        <begin position="236"/>
        <end position="241"/>
    </location>
</feature>
<feature type="helix" evidence="2">
    <location>
        <begin position="247"/>
        <end position="256"/>
    </location>
</feature>
<feature type="helix" evidence="2">
    <location>
        <begin position="260"/>
        <end position="266"/>
    </location>
</feature>
<feature type="strand" evidence="2">
    <location>
        <begin position="269"/>
        <end position="275"/>
    </location>
</feature>
<feature type="helix" evidence="2">
    <location>
        <begin position="276"/>
        <end position="279"/>
    </location>
</feature>
<feature type="helix" evidence="2">
    <location>
        <begin position="282"/>
        <end position="284"/>
    </location>
</feature>
<feature type="strand" evidence="2">
    <location>
        <begin position="287"/>
        <end position="296"/>
    </location>
</feature>
<feature type="strand" evidence="2">
    <location>
        <begin position="299"/>
        <end position="312"/>
    </location>
</feature>
<feature type="helix" evidence="2">
    <location>
        <begin position="314"/>
        <end position="334"/>
    </location>
</feature>
<dbReference type="EMBL" id="AE000512">
    <property type="protein sequence ID" value="AAD35933.1"/>
    <property type="molecule type" value="Genomic_DNA"/>
</dbReference>
<dbReference type="PIR" id="D72327">
    <property type="entry name" value="D72327"/>
</dbReference>
<dbReference type="RefSeq" id="NP_228660.1">
    <property type="nucleotide sequence ID" value="NC_000853.1"/>
</dbReference>
<dbReference type="RefSeq" id="WP_004080775.1">
    <property type="nucleotide sequence ID" value="NZ_CP011107.1"/>
</dbReference>
<dbReference type="PDB" id="1STZ">
    <property type="method" value="X-ray"/>
    <property type="resolution" value="2.20 A"/>
    <property type="chains" value="A/B/C=1-338"/>
</dbReference>
<dbReference type="PDBsum" id="1STZ"/>
<dbReference type="SMR" id="Q9WZV5"/>
<dbReference type="FunCoup" id="Q9WZV5">
    <property type="interactions" value="166"/>
</dbReference>
<dbReference type="STRING" id="243274.TM_0851"/>
<dbReference type="PaxDb" id="243274-THEMA_00385"/>
<dbReference type="EnsemblBacteria" id="AAD35933">
    <property type="protein sequence ID" value="AAD35933"/>
    <property type="gene ID" value="TM_0851"/>
</dbReference>
<dbReference type="KEGG" id="tma:TM0851"/>
<dbReference type="KEGG" id="tmi:THEMA_00385"/>
<dbReference type="KEGG" id="tmm:Tmari_0853"/>
<dbReference type="KEGG" id="tmw:THMA_0872"/>
<dbReference type="eggNOG" id="COG1420">
    <property type="taxonomic scope" value="Bacteria"/>
</dbReference>
<dbReference type="InParanoid" id="Q9WZV5"/>
<dbReference type="OrthoDB" id="9783139at2"/>
<dbReference type="EvolutionaryTrace" id="Q9WZV5"/>
<dbReference type="Proteomes" id="UP000008183">
    <property type="component" value="Chromosome"/>
</dbReference>
<dbReference type="GO" id="GO:0003677">
    <property type="term" value="F:DNA binding"/>
    <property type="evidence" value="ECO:0007669"/>
    <property type="project" value="InterPro"/>
</dbReference>
<dbReference type="GO" id="GO:0045892">
    <property type="term" value="P:negative regulation of DNA-templated transcription"/>
    <property type="evidence" value="ECO:0000318"/>
    <property type="project" value="GO_Central"/>
</dbReference>
<dbReference type="Gene3D" id="3.30.450.40">
    <property type="match status" value="1"/>
</dbReference>
<dbReference type="Gene3D" id="3.30.390.60">
    <property type="entry name" value="Heat-inducible transcription repressor hrca homolog, domain 3"/>
    <property type="match status" value="1"/>
</dbReference>
<dbReference type="Gene3D" id="1.10.10.10">
    <property type="entry name" value="Winged helix-like DNA-binding domain superfamily/Winged helix DNA-binding domain"/>
    <property type="match status" value="1"/>
</dbReference>
<dbReference type="HAMAP" id="MF_00081">
    <property type="entry name" value="HrcA"/>
    <property type="match status" value="1"/>
</dbReference>
<dbReference type="InterPro" id="IPR029016">
    <property type="entry name" value="GAF-like_dom_sf"/>
</dbReference>
<dbReference type="InterPro" id="IPR002571">
    <property type="entry name" value="HrcA"/>
</dbReference>
<dbReference type="InterPro" id="IPR021153">
    <property type="entry name" value="HrcA_C"/>
</dbReference>
<dbReference type="InterPro" id="IPR036388">
    <property type="entry name" value="WH-like_DNA-bd_sf"/>
</dbReference>
<dbReference type="InterPro" id="IPR036390">
    <property type="entry name" value="WH_DNA-bd_sf"/>
</dbReference>
<dbReference type="InterPro" id="IPR023120">
    <property type="entry name" value="WHTH_transcript_rep_HrcA_IDD"/>
</dbReference>
<dbReference type="NCBIfam" id="TIGR00331">
    <property type="entry name" value="hrcA"/>
    <property type="match status" value="1"/>
</dbReference>
<dbReference type="PANTHER" id="PTHR34824">
    <property type="entry name" value="HEAT-INDUCIBLE TRANSCRIPTION REPRESSOR HRCA"/>
    <property type="match status" value="1"/>
</dbReference>
<dbReference type="PANTHER" id="PTHR34824:SF1">
    <property type="entry name" value="HEAT-INDUCIBLE TRANSCRIPTION REPRESSOR HRCA"/>
    <property type="match status" value="1"/>
</dbReference>
<dbReference type="Pfam" id="PF01628">
    <property type="entry name" value="HrcA"/>
    <property type="match status" value="1"/>
</dbReference>
<dbReference type="PIRSF" id="PIRSF005485">
    <property type="entry name" value="HrcA"/>
    <property type="match status" value="1"/>
</dbReference>
<dbReference type="SUPFAM" id="SSF55781">
    <property type="entry name" value="GAF domain-like"/>
    <property type="match status" value="1"/>
</dbReference>
<dbReference type="SUPFAM" id="SSF46785">
    <property type="entry name" value="Winged helix' DNA-binding domain"/>
    <property type="match status" value="1"/>
</dbReference>
<reference key="1">
    <citation type="journal article" date="1999" name="Nature">
        <title>Evidence for lateral gene transfer between Archaea and Bacteria from genome sequence of Thermotoga maritima.</title>
        <authorList>
            <person name="Nelson K.E."/>
            <person name="Clayton R.A."/>
            <person name="Gill S.R."/>
            <person name="Gwinn M.L."/>
            <person name="Dodson R.J."/>
            <person name="Haft D.H."/>
            <person name="Hickey E.K."/>
            <person name="Peterson J.D."/>
            <person name="Nelson W.C."/>
            <person name="Ketchum K.A."/>
            <person name="McDonald L.A."/>
            <person name="Utterback T.R."/>
            <person name="Malek J.A."/>
            <person name="Linher K.D."/>
            <person name="Garrett M.M."/>
            <person name="Stewart A.M."/>
            <person name="Cotton M.D."/>
            <person name="Pratt M.S."/>
            <person name="Phillips C.A."/>
            <person name="Richardson D.L."/>
            <person name="Heidelberg J.F."/>
            <person name="Sutton G.G."/>
            <person name="Fleischmann R.D."/>
            <person name="Eisen J.A."/>
            <person name="White O."/>
            <person name="Salzberg S.L."/>
            <person name="Smith H.O."/>
            <person name="Venter J.C."/>
            <person name="Fraser C.M."/>
        </authorList>
    </citation>
    <scope>NUCLEOTIDE SEQUENCE [LARGE SCALE GENOMIC DNA]</scope>
    <source>
        <strain>ATCC 43589 / DSM 3109 / JCM 10099 / NBRC 100826 / MSB8</strain>
    </source>
</reference>
<sequence>MRRLNRKNNEALKKLNDRQRKVLYCIVREYIENKKPVSSQRVLEVSNIEFSSATIRNDMKKLEYLGYIYQPHTSAGRIPTDKGLRFYYEEMLKISKETSEADLAVETFKSMPLADPEKVLFLAGNLLARLTEGYVLIERPNTRDLKILRVMLIPVSEDYLIFSILTEFGVSKVTPIKTQERLNWEEIERQLNFLLRGRTVGEVLMGKIESLKGSGFLRLIESLIGETVERYLDAGLENLLKDETLTLEDIRNLLEEVKDQKFLESLVGEGITVRIGREIGRKKLEKFAVFSGKYFKGESPIGSVYLFTSKVTKYDRNHRVFEYILNRLSEYFTSTSRR</sequence>
<name>HRCA_THEMA</name>
<keyword id="KW-0002">3D-structure</keyword>
<keyword id="KW-1185">Reference proteome</keyword>
<keyword id="KW-0678">Repressor</keyword>
<keyword id="KW-0346">Stress response</keyword>
<keyword id="KW-0804">Transcription</keyword>
<keyword id="KW-0805">Transcription regulation</keyword>
<proteinExistence type="evidence at protein level"/>